<reference key="1">
    <citation type="journal article" date="2000" name="Nature">
        <title>Sequence and analysis of chromosome 1 of the plant Arabidopsis thaliana.</title>
        <authorList>
            <person name="Theologis A."/>
            <person name="Ecker J.R."/>
            <person name="Palm C.J."/>
            <person name="Federspiel N.A."/>
            <person name="Kaul S."/>
            <person name="White O."/>
            <person name="Alonso J."/>
            <person name="Altafi H."/>
            <person name="Araujo R."/>
            <person name="Bowman C.L."/>
            <person name="Brooks S.Y."/>
            <person name="Buehler E."/>
            <person name="Chan A."/>
            <person name="Chao Q."/>
            <person name="Chen H."/>
            <person name="Cheuk R.F."/>
            <person name="Chin C.W."/>
            <person name="Chung M.K."/>
            <person name="Conn L."/>
            <person name="Conway A.B."/>
            <person name="Conway A.R."/>
            <person name="Creasy T.H."/>
            <person name="Dewar K."/>
            <person name="Dunn P."/>
            <person name="Etgu P."/>
            <person name="Feldblyum T.V."/>
            <person name="Feng J.-D."/>
            <person name="Fong B."/>
            <person name="Fujii C.Y."/>
            <person name="Gill J.E."/>
            <person name="Goldsmith A.D."/>
            <person name="Haas B."/>
            <person name="Hansen N.F."/>
            <person name="Hughes B."/>
            <person name="Huizar L."/>
            <person name="Hunter J.L."/>
            <person name="Jenkins J."/>
            <person name="Johnson-Hopson C."/>
            <person name="Khan S."/>
            <person name="Khaykin E."/>
            <person name="Kim C.J."/>
            <person name="Koo H.L."/>
            <person name="Kremenetskaia I."/>
            <person name="Kurtz D.B."/>
            <person name="Kwan A."/>
            <person name="Lam B."/>
            <person name="Langin-Hooper S."/>
            <person name="Lee A."/>
            <person name="Lee J.M."/>
            <person name="Lenz C.A."/>
            <person name="Li J.H."/>
            <person name="Li Y.-P."/>
            <person name="Lin X."/>
            <person name="Liu S.X."/>
            <person name="Liu Z.A."/>
            <person name="Luros J.S."/>
            <person name="Maiti R."/>
            <person name="Marziali A."/>
            <person name="Militscher J."/>
            <person name="Miranda M."/>
            <person name="Nguyen M."/>
            <person name="Nierman W.C."/>
            <person name="Osborne B.I."/>
            <person name="Pai G."/>
            <person name="Peterson J."/>
            <person name="Pham P.K."/>
            <person name="Rizzo M."/>
            <person name="Rooney T."/>
            <person name="Rowley D."/>
            <person name="Sakano H."/>
            <person name="Salzberg S.L."/>
            <person name="Schwartz J.R."/>
            <person name="Shinn P."/>
            <person name="Southwick A.M."/>
            <person name="Sun H."/>
            <person name="Tallon L.J."/>
            <person name="Tambunga G."/>
            <person name="Toriumi M.J."/>
            <person name="Town C.D."/>
            <person name="Utterback T."/>
            <person name="Van Aken S."/>
            <person name="Vaysberg M."/>
            <person name="Vysotskaia V.S."/>
            <person name="Walker M."/>
            <person name="Wu D."/>
            <person name="Yu G."/>
            <person name="Fraser C.M."/>
            <person name="Venter J.C."/>
            <person name="Davis R.W."/>
        </authorList>
    </citation>
    <scope>NUCLEOTIDE SEQUENCE [LARGE SCALE GENOMIC DNA]</scope>
    <source>
        <strain>cv. Columbia</strain>
    </source>
</reference>
<reference key="2">
    <citation type="journal article" date="2017" name="Plant J.">
        <title>Araport11: a complete reannotation of the Arabidopsis thaliana reference genome.</title>
        <authorList>
            <person name="Cheng C.Y."/>
            <person name="Krishnakumar V."/>
            <person name="Chan A.P."/>
            <person name="Thibaud-Nissen F."/>
            <person name="Schobel S."/>
            <person name="Town C.D."/>
        </authorList>
    </citation>
    <scope>GENOME REANNOTATION</scope>
    <source>
        <strain>cv. Columbia</strain>
    </source>
</reference>
<reference key="3">
    <citation type="journal article" date="2003" name="Science">
        <title>Empirical analysis of transcriptional activity in the Arabidopsis genome.</title>
        <authorList>
            <person name="Yamada K."/>
            <person name="Lim J."/>
            <person name="Dale J.M."/>
            <person name="Chen H."/>
            <person name="Shinn P."/>
            <person name="Palm C.J."/>
            <person name="Southwick A.M."/>
            <person name="Wu H.C."/>
            <person name="Kim C.J."/>
            <person name="Nguyen M."/>
            <person name="Pham P.K."/>
            <person name="Cheuk R.F."/>
            <person name="Karlin-Newmann G."/>
            <person name="Liu S.X."/>
            <person name="Lam B."/>
            <person name="Sakano H."/>
            <person name="Wu T."/>
            <person name="Yu G."/>
            <person name="Miranda M."/>
            <person name="Quach H.L."/>
            <person name="Tripp M."/>
            <person name="Chang C.H."/>
            <person name="Lee J.M."/>
            <person name="Toriumi M.J."/>
            <person name="Chan M.M."/>
            <person name="Tang C.C."/>
            <person name="Onodera C.S."/>
            <person name="Deng J.M."/>
            <person name="Akiyama K."/>
            <person name="Ansari Y."/>
            <person name="Arakawa T."/>
            <person name="Banh J."/>
            <person name="Banno F."/>
            <person name="Bowser L."/>
            <person name="Brooks S.Y."/>
            <person name="Carninci P."/>
            <person name="Chao Q."/>
            <person name="Choy N."/>
            <person name="Enju A."/>
            <person name="Goldsmith A.D."/>
            <person name="Gurjal M."/>
            <person name="Hansen N.F."/>
            <person name="Hayashizaki Y."/>
            <person name="Johnson-Hopson C."/>
            <person name="Hsuan V.W."/>
            <person name="Iida K."/>
            <person name="Karnes M."/>
            <person name="Khan S."/>
            <person name="Koesema E."/>
            <person name="Ishida J."/>
            <person name="Jiang P.X."/>
            <person name="Jones T."/>
            <person name="Kawai J."/>
            <person name="Kamiya A."/>
            <person name="Meyers C."/>
            <person name="Nakajima M."/>
            <person name="Narusaka M."/>
            <person name="Seki M."/>
            <person name="Sakurai T."/>
            <person name="Satou M."/>
            <person name="Tamse R."/>
            <person name="Vaysberg M."/>
            <person name="Wallender E.K."/>
            <person name="Wong C."/>
            <person name="Yamamura Y."/>
            <person name="Yuan S."/>
            <person name="Shinozaki K."/>
            <person name="Davis R.W."/>
            <person name="Theologis A."/>
            <person name="Ecker J.R."/>
        </authorList>
    </citation>
    <scope>NUCLEOTIDE SEQUENCE [LARGE SCALE MRNA]</scope>
    <source>
        <strain>cv. Columbia</strain>
    </source>
</reference>
<reference key="4">
    <citation type="journal article" date="2002" name="Trends Plant Sci.">
        <title>bZIP transcription factors in Arabidopsis.</title>
        <authorList>
            <person name="Jakoby M."/>
            <person name="Weisshaar B."/>
            <person name="Droege-Laser W."/>
            <person name="Vicente-Carbajosa J."/>
            <person name="Tiedemann J."/>
            <person name="Kroj T."/>
            <person name="Parcy F."/>
        </authorList>
    </citation>
    <scope>GENE FAMILY</scope>
    <scope>NOMENCLATURE</scope>
</reference>
<reference key="5">
    <citation type="journal article" date="2005" name="Proc. Natl. Acad. Sci. U.S.A.">
        <title>An Arabidopsis transcription factor, AtbZIP60, regulates the endoplasmic reticulum stress response in a manner unique to plants.</title>
        <authorList>
            <person name="Iwata Y."/>
            <person name="Koizumi N."/>
        </authorList>
    </citation>
    <scope>FUNCTION</scope>
    <scope>INDUCTION</scope>
    <scope>SUBCELLULAR LOCATION</scope>
</reference>
<reference key="6">
    <citation type="journal article" date="2008" name="Mol. Genet. Genomics">
        <title>Endoplasmic reticulum stress activates the expression of a sub-group of protein disulfide isomerase genes and AtbZIP60 modulates the response in Arabidopsis thaliana.</title>
        <authorList>
            <person name="Lu D.-P."/>
            <person name="Christopher D.A."/>
        </authorList>
    </citation>
    <scope>FUNCTION</scope>
    <scope>DISRUPTION PHENOTYPE</scope>
</reference>
<reference key="7">
    <citation type="journal article" date="2008" name="Plant Cell">
        <title>Arabidopsis bZIP60 is a proteolysis-activated transcription factor involved in the endoplasmic reticulum stress response.</title>
        <authorList>
            <person name="Iwata Y."/>
            <person name="Fedoroff N.V."/>
            <person name="Koizumi N."/>
        </authorList>
    </citation>
    <scope>FUNCTION</scope>
    <scope>DISRUPTION PHENOTYPE</scope>
    <scope>SUBCELLULAR LOCATION</scope>
    <scope>TISSUE SPECIFICITY</scope>
</reference>
<reference key="8">
    <citation type="journal article" date="2010" name="Plant Cell">
        <title>bZIP28 and NF-Y transcription factors are activated by ER stress and assemble into a transcriptional complex to regulate stress response genes in Arabidopsis.</title>
        <authorList>
            <person name="Liu J.X."/>
            <person name="Howell S.H."/>
        </authorList>
    </citation>
    <scope>INTERACTION WITH BZIP28</scope>
</reference>
<reference key="9">
    <citation type="journal article" date="2011" name="Proc. Natl. Acad. Sci. U.S.A.">
        <title>Heat induces the splicing by IRE1 of a mRNA encoding a transcription factor involved in the unfolded protein response in Arabidopsis.</title>
        <authorList>
            <person name="Deng Y."/>
            <person name="Humbert S."/>
            <person name="Liu J.X."/>
            <person name="Srivastava R."/>
            <person name="Rothstein S.J."/>
            <person name="Howell S.H."/>
        </authorList>
    </citation>
    <scope>ALTERNATIVE SPLICING</scope>
    <scope>FUNCTION</scope>
    <scope>SUBCELLULAR LOCATION</scope>
    <scope>INDUCTION BY HEAT</scope>
</reference>
<reference key="10">
    <citation type="journal article" date="2011" name="Sci. Rep.">
        <title>Arabidopsis IRE1 catalyses unconventional splicing of bZIP60 mRNA to produce the active transcription factor.</title>
        <authorList>
            <person name="Nagashima Y."/>
            <person name="Mishiba K."/>
            <person name="Suzuki E."/>
            <person name="Shimada Y."/>
            <person name="Iwata Y."/>
            <person name="Koizumi N."/>
        </authorList>
    </citation>
    <scope>ALTERNATIVE SPLICING</scope>
</reference>
<reference key="11">
    <citation type="journal article" date="2012" name="PLoS ONE">
        <title>IRE1/bZIP60-mediated unfolded protein response plays distinct roles in plant immunity and abiotic stress responses.</title>
        <authorList>
            <person name="Moreno A.A."/>
            <person name="Mukhtar M.S."/>
            <person name="Blanco F."/>
            <person name="Boatwright J.L."/>
            <person name="Moreno I."/>
            <person name="Jordan M.R."/>
            <person name="Chen Y."/>
            <person name="Brandizzi F."/>
            <person name="Dong X."/>
            <person name="Orellana A."/>
            <person name="Pajerowska-Mukhtar K.M."/>
        </authorList>
    </citation>
    <scope>FUNCTION</scope>
    <scope>DISRUPTION PHENOTYPE</scope>
</reference>
<reference key="12">
    <citation type="journal article" date="2012" name="Trends Plant Sci.">
        <title>Plant transducers of the endoplasmic reticulum unfolded protein response.</title>
        <authorList>
            <person name="Iwata Y."/>
            <person name="Koizumi N."/>
        </authorList>
    </citation>
    <scope>REVIEW</scope>
</reference>
<accession>Q9C7S0</accession>
<organism>
    <name type="scientific">Arabidopsis thaliana</name>
    <name type="common">Mouse-ear cress</name>
    <dbReference type="NCBI Taxonomy" id="3702"/>
    <lineage>
        <taxon>Eukaryota</taxon>
        <taxon>Viridiplantae</taxon>
        <taxon>Streptophyta</taxon>
        <taxon>Embryophyta</taxon>
        <taxon>Tracheophyta</taxon>
        <taxon>Spermatophyta</taxon>
        <taxon>Magnoliopsida</taxon>
        <taxon>eudicotyledons</taxon>
        <taxon>Gunneridae</taxon>
        <taxon>Pentapetalae</taxon>
        <taxon>rosids</taxon>
        <taxon>malvids</taxon>
        <taxon>Brassicales</taxon>
        <taxon>Brassicaceae</taxon>
        <taxon>Camelineae</taxon>
        <taxon>Arabidopsis</taxon>
    </lineage>
</organism>
<sequence>MAEEFGSIDLLGDEDFFFDFDPSIVIDSLPAEDFLQSSPDSWIGEIENQLMNDENHQEESFVELDQQSVSDFIADLLVDYPTSDSGSVDLAADKVLTVDSPAAADDSGKENSDLVVEKKSNDSGSEIHDDDDEEGDDDAVAKKRRRRVRNRDAAVRSRERKKEYVQDLEKKSKYLERECLRLGRMLECFVAENQSLRYCLQKGNGNNTTMMSKQESAVLLLESLLLGSLLWLLGVNFICLFPYMSHTKCCLLRPEPEKLVLNGLGSSSKPSYTGVSRRCKGSRPRMKYQILTLAA</sequence>
<gene>
    <name evidence="10" type="primary">BZIP60</name>
    <name type="ordered locus">At1g42990</name>
    <name type="ORF">F13A11.5</name>
</gene>
<comment type="function">
    <text evidence="4 5 6 8 9">Transcription factor involved in the unfolded protein response (UPR). Acts during endoplasmic reticulum stress (ER) by activating unfolded protein response (UPR) target genes via direct binding to the UPR element (UPRE). Plays a role in plant immunity and abiotic stress responses.</text>
</comment>
<comment type="subunit">
    <text evidence="7">Interacts with BZIP28.</text>
</comment>
<comment type="subcellular location">
    <molecule>Isoform 1</molecule>
    <subcellularLocation>
        <location>Endoplasmic reticulum membrane</location>
        <topology>Single-pass membrane protein</topology>
    </subcellularLocation>
</comment>
<comment type="subcellular location">
    <molecule>Isoform 2</molecule>
    <subcellularLocation>
        <location>Nucleus</location>
    </subcellularLocation>
    <text>The bZIP domain is translocated into the nucleus in response to ER stress.</text>
</comment>
<comment type="alternative products">
    <event type="alternative splicing"/>
    <isoform>
        <id>Q9C7S0-1</id>
        <name>1</name>
        <name>bZIP60u</name>
        <sequence type="displayed"/>
    </isoform>
    <isoform>
        <id>Q9C7S0-2</id>
        <name>2</name>
        <name>bZIP60s</name>
        <sequence type="described" ref="VSP_046442"/>
    </isoform>
</comment>
<comment type="tissue specificity">
    <text evidence="6">Expressed in seedlings, rosette and cauline leaves, stems, buds, flowers, siliques, immature seeds, anthers and pollen grains.</text>
</comment>
<comment type="induction">
    <text evidence="4 8">By tunicamycin, DTT and azetidine-2-carboxylate. Isoform 2 is induced by heat.</text>
</comment>
<comment type="domain">
    <text>The C-terminal transmembrane domain is cleaved in response to ER stress and the N-terminal fragment containing the bZIP domain is sufficient for transcription activation.</text>
</comment>
<comment type="disruption phenotype">
    <text evidence="5 6 9">No visible phenotype, but reduced induction of ER stress-responsive genes. Shows enhanced susceptibility to a bacterial pathogen.</text>
</comment>
<comment type="miscellaneous">
    <text>Expression and cleavage of bZIP60 in anthers observed in the absence of stress treatment, suggesting that the ER stress response functions in the normal development of active secretory cells.</text>
</comment>
<comment type="miscellaneous">
    <molecule>Isoform 2</molecule>
    <text evidence="11">Potent transcriptional activator. Induced by IRE1-1 in response to endoplasmic reticulum stress. IRE1-1 cleaves a 23-bp fragment causing a frameshift of the mRNA transcript.</text>
</comment>
<comment type="similarity">
    <text evidence="11">Belongs to the bZIP family.</text>
</comment>
<evidence type="ECO:0000255" key="1"/>
<evidence type="ECO:0000255" key="2">
    <source>
        <dbReference type="PROSITE-ProRule" id="PRU00978"/>
    </source>
</evidence>
<evidence type="ECO:0000256" key="3">
    <source>
        <dbReference type="SAM" id="MobiDB-lite"/>
    </source>
</evidence>
<evidence type="ECO:0000269" key="4">
    <source>
    </source>
</evidence>
<evidence type="ECO:0000269" key="5">
    <source>
    </source>
</evidence>
<evidence type="ECO:0000269" key="6">
    <source>
    </source>
</evidence>
<evidence type="ECO:0000269" key="7">
    <source>
    </source>
</evidence>
<evidence type="ECO:0000269" key="8">
    <source>
    </source>
</evidence>
<evidence type="ECO:0000269" key="9">
    <source>
    </source>
</evidence>
<evidence type="ECO:0000303" key="10">
    <source>
    </source>
</evidence>
<evidence type="ECO:0000305" key="11"/>
<protein>
    <recommendedName>
        <fullName evidence="10">bZIP transcription factor 60</fullName>
        <shortName evidence="10">AtbZIP60</shortName>
    </recommendedName>
</protein>
<dbReference type="EMBL" id="AC068324">
    <property type="protein sequence ID" value="AAG51519.1"/>
    <property type="molecule type" value="Genomic_DNA"/>
</dbReference>
<dbReference type="EMBL" id="CP002684">
    <property type="protein sequence ID" value="AEE31935.1"/>
    <property type="molecule type" value="Genomic_DNA"/>
</dbReference>
<dbReference type="EMBL" id="AY045964">
    <property type="protein sequence ID" value="AAK76638.1"/>
    <property type="molecule type" value="mRNA"/>
</dbReference>
<dbReference type="EMBL" id="AY133805">
    <property type="protein sequence ID" value="AAM91739.1"/>
    <property type="molecule type" value="mRNA"/>
</dbReference>
<dbReference type="PIR" id="E96497">
    <property type="entry name" value="E96497"/>
</dbReference>
<dbReference type="RefSeq" id="NP_174998.1">
    <molecule id="Q9C7S0-1"/>
    <property type="nucleotide sequence ID" value="NM_103458.3"/>
</dbReference>
<dbReference type="SMR" id="Q9C7S0"/>
<dbReference type="BioGRID" id="26122">
    <property type="interactions" value="9"/>
</dbReference>
<dbReference type="FunCoup" id="Q9C7S0">
    <property type="interactions" value="441"/>
</dbReference>
<dbReference type="IntAct" id="Q9C7S0">
    <property type="interactions" value="5"/>
</dbReference>
<dbReference type="STRING" id="3702.Q9C7S0"/>
<dbReference type="PaxDb" id="3702-AT1G42990.1"/>
<dbReference type="EnsemblPlants" id="AT1G42990.1">
    <molecule id="Q9C7S0-1"/>
    <property type="protein sequence ID" value="AT1G42990.1"/>
    <property type="gene ID" value="AT1G42990"/>
</dbReference>
<dbReference type="GeneID" id="840897"/>
<dbReference type="Gramene" id="AT1G42990.1">
    <molecule id="Q9C7S0-1"/>
    <property type="protein sequence ID" value="AT1G42990.1"/>
    <property type="gene ID" value="AT1G42990"/>
</dbReference>
<dbReference type="KEGG" id="ath:AT1G42990"/>
<dbReference type="Araport" id="AT1G42990"/>
<dbReference type="TAIR" id="AT1G42990">
    <property type="gene designation" value="BZIP60"/>
</dbReference>
<dbReference type="eggNOG" id="KOG0017">
    <property type="taxonomic scope" value="Eukaryota"/>
</dbReference>
<dbReference type="HOGENOM" id="CLU_054669_1_0_1"/>
<dbReference type="InParanoid" id="Q9C7S0"/>
<dbReference type="OMA" id="LERECMR"/>
<dbReference type="PhylomeDB" id="Q9C7S0"/>
<dbReference type="PRO" id="PR:Q9C7S0"/>
<dbReference type="Proteomes" id="UP000006548">
    <property type="component" value="Chromosome 1"/>
</dbReference>
<dbReference type="ExpressionAtlas" id="Q9C7S0">
    <property type="expression patterns" value="baseline and differential"/>
</dbReference>
<dbReference type="GO" id="GO:0005789">
    <property type="term" value="C:endoplasmic reticulum membrane"/>
    <property type="evidence" value="ECO:0000314"/>
    <property type="project" value="TAIR"/>
</dbReference>
<dbReference type="GO" id="GO:0005634">
    <property type="term" value="C:nucleus"/>
    <property type="evidence" value="ECO:0000314"/>
    <property type="project" value="TAIR"/>
</dbReference>
<dbReference type="GO" id="GO:0003700">
    <property type="term" value="F:DNA-binding transcription factor activity"/>
    <property type="evidence" value="ECO:0000314"/>
    <property type="project" value="TAIR"/>
</dbReference>
<dbReference type="GO" id="GO:0043565">
    <property type="term" value="F:sequence-specific DNA binding"/>
    <property type="evidence" value="ECO:0000353"/>
    <property type="project" value="TAIR"/>
</dbReference>
<dbReference type="GO" id="GO:0030968">
    <property type="term" value="P:endoplasmic reticulum unfolded protein response"/>
    <property type="evidence" value="ECO:0000315"/>
    <property type="project" value="TAIR"/>
</dbReference>
<dbReference type="GO" id="GO:0002376">
    <property type="term" value="P:immune system process"/>
    <property type="evidence" value="ECO:0007669"/>
    <property type="project" value="UniProtKB-KW"/>
</dbReference>
<dbReference type="CDD" id="cd14704">
    <property type="entry name" value="bZIP_HY5-like"/>
    <property type="match status" value="1"/>
</dbReference>
<dbReference type="Gene3D" id="1.20.5.170">
    <property type="match status" value="1"/>
</dbReference>
<dbReference type="InterPro" id="IPR004827">
    <property type="entry name" value="bZIP"/>
</dbReference>
<dbReference type="InterPro" id="IPR046347">
    <property type="entry name" value="bZIP_sf"/>
</dbReference>
<dbReference type="PANTHER" id="PTHR47416:SF8">
    <property type="entry name" value="BASIC-LEUCINE ZIPPER TRANSCRIPTION FACTOR E-RELATED"/>
    <property type="match status" value="1"/>
</dbReference>
<dbReference type="PANTHER" id="PTHR47416">
    <property type="entry name" value="BASIC-LEUCINE ZIPPER TRANSCRIPTION FACTOR F-RELATED"/>
    <property type="match status" value="1"/>
</dbReference>
<dbReference type="Pfam" id="PF07716">
    <property type="entry name" value="bZIP_2"/>
    <property type="match status" value="1"/>
</dbReference>
<dbReference type="SMART" id="SM00338">
    <property type="entry name" value="BRLZ"/>
    <property type="match status" value="1"/>
</dbReference>
<dbReference type="SUPFAM" id="SSF57959">
    <property type="entry name" value="Leucine zipper domain"/>
    <property type="match status" value="1"/>
</dbReference>
<dbReference type="PROSITE" id="PS50217">
    <property type="entry name" value="BZIP"/>
    <property type="match status" value="1"/>
</dbReference>
<dbReference type="PROSITE" id="PS00036">
    <property type="entry name" value="BZIP_BASIC"/>
    <property type="match status" value="1"/>
</dbReference>
<proteinExistence type="evidence at protein level"/>
<keyword id="KW-0025">Alternative splicing</keyword>
<keyword id="KW-0238">DNA-binding</keyword>
<keyword id="KW-0256">Endoplasmic reticulum</keyword>
<keyword id="KW-0391">Immunity</keyword>
<keyword id="KW-0472">Membrane</keyword>
<keyword id="KW-0539">Nucleus</keyword>
<keyword id="KW-1185">Reference proteome</keyword>
<keyword id="KW-0804">Transcription</keyword>
<keyword id="KW-0805">Transcription regulation</keyword>
<keyword id="KW-0812">Transmembrane</keyword>
<keyword id="KW-1133">Transmembrane helix</keyword>
<feature type="chain" id="PRO_0000376620" description="bZIP transcription factor 60">
    <location>
        <begin position="1"/>
        <end position="295"/>
    </location>
</feature>
<feature type="transmembrane region" description="Helical" evidence="1">
    <location>
        <begin position="224"/>
        <end position="244"/>
    </location>
</feature>
<feature type="domain" description="bZIP" evidence="2">
    <location>
        <begin position="140"/>
        <end position="203"/>
    </location>
</feature>
<feature type="region of interest" description="Disordered" evidence="3">
    <location>
        <begin position="101"/>
        <end position="154"/>
    </location>
</feature>
<feature type="region of interest" description="Basic motif" evidence="2">
    <location>
        <begin position="142"/>
        <end position="162"/>
    </location>
</feature>
<feature type="region of interest" description="Leucine-zipper" evidence="2">
    <location>
        <begin position="168"/>
        <end position="182"/>
    </location>
</feature>
<feature type="compositionally biased region" description="Basic and acidic residues" evidence="3">
    <location>
        <begin position="106"/>
        <end position="127"/>
    </location>
</feature>
<feature type="compositionally biased region" description="Acidic residues" evidence="3">
    <location>
        <begin position="128"/>
        <end position="138"/>
    </location>
</feature>
<feature type="splice variant" id="VSP_046442" description="In isoform 2." evidence="11">
    <original>LLLESLLLGSLLWLLGVNFICLFPYMSHTKCCLLRPEPEKLVLNGLGSSSKPSYTGVSRRCKGSRPRMKYQILTLAA</original>
    <variation>GFPALASGSKLHLPIPLYVPHKVLPPTSRTRKAGSKRARE</variation>
    <location>
        <begin position="219"/>
        <end position="295"/>
    </location>
</feature>
<name>BZP60_ARATH</name>